<sequence length="247" mass="27390">MHQDTVRGKAFAMPLISPAYPAGPYRFRNREYLIITYRTDPQKLRDLVPEPLQVCEPMVKFEFIRMPDSTGFGDYTEGGQVIPVSFYGRRGSYTHCMFLDDHPPIAGGRELWGFPKKLASPTLRTETDTLVGTLDYGPVRVATGTMGYKHRAADLASVRASLAEPNFLLKIIPHVDGTPRICELVEYHLEDVHLRGAWTGPAALNLWSHALAPVAELPVLEVVSAVHLVADLTLALGKVVHDYLAKA</sequence>
<name>ADC1_RHILO</name>
<proteinExistence type="inferred from homology"/>
<keyword id="KW-0210">Decarboxylase</keyword>
<keyword id="KW-0456">Lyase</keyword>
<keyword id="KW-0704">Schiff base</keyword>
<organism>
    <name type="scientific">Mesorhizobium japonicum (strain LMG 29417 / CECT 9101 / MAFF 303099)</name>
    <name type="common">Mesorhizobium loti (strain MAFF 303099)</name>
    <dbReference type="NCBI Taxonomy" id="266835"/>
    <lineage>
        <taxon>Bacteria</taxon>
        <taxon>Pseudomonadati</taxon>
        <taxon>Pseudomonadota</taxon>
        <taxon>Alphaproteobacteria</taxon>
        <taxon>Hyphomicrobiales</taxon>
        <taxon>Phyllobacteriaceae</taxon>
        <taxon>Mesorhizobium</taxon>
    </lineage>
</organism>
<dbReference type="EC" id="4.1.1.4" evidence="1"/>
<dbReference type="EMBL" id="AL672114">
    <property type="protein sequence ID" value="CAD31314.1"/>
    <property type="molecule type" value="Genomic_DNA"/>
</dbReference>
<dbReference type="EMBL" id="BA000012">
    <property type="protein sequence ID" value="BAB52286.1"/>
    <property type="molecule type" value="Genomic_DNA"/>
</dbReference>
<dbReference type="RefSeq" id="WP_010913619.1">
    <property type="nucleotide sequence ID" value="NC_002678.2"/>
</dbReference>
<dbReference type="SMR" id="Q98AN6"/>
<dbReference type="KEGG" id="mlo:mll5917"/>
<dbReference type="PATRIC" id="fig|266835.9.peg.4710"/>
<dbReference type="eggNOG" id="COG4689">
    <property type="taxonomic scope" value="Bacteria"/>
</dbReference>
<dbReference type="HOGENOM" id="CLU_077089_0_0_5"/>
<dbReference type="Proteomes" id="UP000000552">
    <property type="component" value="Chromosome"/>
</dbReference>
<dbReference type="GO" id="GO:0047602">
    <property type="term" value="F:acetoacetate decarboxylase activity"/>
    <property type="evidence" value="ECO:0007669"/>
    <property type="project" value="UniProtKB-UniRule"/>
</dbReference>
<dbReference type="Gene3D" id="2.40.400.10">
    <property type="entry name" value="Acetoacetate decarboxylase-like"/>
    <property type="match status" value="1"/>
</dbReference>
<dbReference type="HAMAP" id="MF_00597">
    <property type="entry name" value="ADC"/>
    <property type="match status" value="1"/>
</dbReference>
<dbReference type="InterPro" id="IPR010451">
    <property type="entry name" value="Acetoacetate_decarboxylase"/>
</dbReference>
<dbReference type="InterPro" id="IPR023653">
    <property type="entry name" value="Acetoacetate_decarboxylase_bac"/>
</dbReference>
<dbReference type="InterPro" id="IPR023375">
    <property type="entry name" value="ADC_dom_sf"/>
</dbReference>
<dbReference type="NCBIfam" id="NF002614">
    <property type="entry name" value="PRK02265.1"/>
    <property type="match status" value="1"/>
</dbReference>
<dbReference type="Pfam" id="PF06314">
    <property type="entry name" value="ADC"/>
    <property type="match status" value="1"/>
</dbReference>
<dbReference type="SUPFAM" id="SSF160104">
    <property type="entry name" value="Acetoacetate decarboxylase-like"/>
    <property type="match status" value="1"/>
</dbReference>
<comment type="function">
    <text evidence="1">Catalyzes the conversion of acetoacetate to acetone and carbon dioxide.</text>
</comment>
<comment type="catalytic activity">
    <reaction evidence="1">
        <text>acetoacetate + H(+) = acetone + CO2</text>
        <dbReference type="Rhea" id="RHEA:19729"/>
        <dbReference type="ChEBI" id="CHEBI:13705"/>
        <dbReference type="ChEBI" id="CHEBI:15347"/>
        <dbReference type="ChEBI" id="CHEBI:15378"/>
        <dbReference type="ChEBI" id="CHEBI:16526"/>
        <dbReference type="EC" id="4.1.1.4"/>
    </reaction>
</comment>
<comment type="similarity">
    <text evidence="1">Belongs to the ADC family.</text>
</comment>
<gene>
    <name evidence="1" type="primary">adc1</name>
    <name type="ordered locus">mll5917</name>
</gene>
<reference key="1">
    <citation type="journal article" date="2002" name="J. Bacteriol.">
        <title>Comparative sequence analysis of the symbiosis island of Mesorhizobium loti strain R7A.</title>
        <authorList>
            <person name="Sullivan J.T."/>
            <person name="Trzebiatowski J.R."/>
            <person name="Cruickshank R.W."/>
            <person name="Gouzy J."/>
            <person name="Brown S.D."/>
            <person name="Elliot R.M."/>
            <person name="Fleetwood D.J."/>
            <person name="McCallum N.G."/>
            <person name="Rossbach U."/>
            <person name="Stuart G.S."/>
            <person name="Weaver J.E."/>
            <person name="Webby R.J."/>
            <person name="de Bruijn F.J."/>
            <person name="Ronson C.W."/>
        </authorList>
    </citation>
    <scope>NUCLEOTIDE SEQUENCE [GENOMIC DNA]</scope>
    <source>
        <strain>R7A</strain>
    </source>
</reference>
<reference key="2">
    <citation type="journal article" date="2000" name="DNA Res.">
        <title>Complete genome structure of the nitrogen-fixing symbiotic bacterium Mesorhizobium loti.</title>
        <authorList>
            <person name="Kaneko T."/>
            <person name="Nakamura Y."/>
            <person name="Sato S."/>
            <person name="Asamizu E."/>
            <person name="Kato T."/>
            <person name="Sasamoto S."/>
            <person name="Watanabe A."/>
            <person name="Idesawa K."/>
            <person name="Ishikawa A."/>
            <person name="Kawashima K."/>
            <person name="Kimura T."/>
            <person name="Kishida Y."/>
            <person name="Kiyokawa C."/>
            <person name="Kohara M."/>
            <person name="Matsumoto M."/>
            <person name="Matsuno A."/>
            <person name="Mochizuki Y."/>
            <person name="Nakayama S."/>
            <person name="Nakazaki N."/>
            <person name="Shimpo S."/>
            <person name="Sugimoto M."/>
            <person name="Takeuchi C."/>
            <person name="Yamada M."/>
            <person name="Tabata S."/>
        </authorList>
    </citation>
    <scope>NUCLEOTIDE SEQUENCE [LARGE SCALE GENOMIC DNA]</scope>
    <source>
        <strain>LMG 29417 / CECT 9101 / MAFF 303099</strain>
    </source>
</reference>
<protein>
    <recommendedName>
        <fullName evidence="1">Acetoacetate decarboxylase 1</fullName>
        <shortName evidence="1">AAD 1</shortName>
        <shortName evidence="1">ADC 1</shortName>
        <ecNumber evidence="1">4.1.1.4</ecNumber>
    </recommendedName>
</protein>
<feature type="chain" id="PRO_0000207106" description="Acetoacetate decarboxylase 1">
    <location>
        <begin position="1"/>
        <end position="247"/>
    </location>
</feature>
<feature type="active site" description="Schiff-base intermediate with acetoacetate" evidence="1">
    <location>
        <position position="116"/>
    </location>
</feature>
<feature type="sequence conflict" description="In Ref. 1; CAD31314." evidence="2" ref="1">
    <original>I</original>
    <variation>T</variation>
    <location>
        <position position="16"/>
    </location>
</feature>
<feature type="sequence conflict" description="In Ref. 1; CAD31314." evidence="2" ref="1">
    <original>Y</original>
    <variation>C</variation>
    <location>
        <position position="87"/>
    </location>
</feature>
<feature type="sequence conflict" description="In Ref. 1; CAD31314." evidence="2" ref="1">
    <original>V</original>
    <variation>A</variation>
    <location>
        <position position="192"/>
    </location>
</feature>
<feature type="sequence conflict" description="In Ref. 1; CAD31314." evidence="2" ref="1">
    <original>AK</original>
    <variation>PE</variation>
    <location>
        <begin position="245"/>
        <end position="246"/>
    </location>
</feature>
<evidence type="ECO:0000255" key="1">
    <source>
        <dbReference type="HAMAP-Rule" id="MF_00597"/>
    </source>
</evidence>
<evidence type="ECO:0000305" key="2"/>
<accession>Q98AN6</accession>
<accession>Q8KJA4</accession>